<reference key="1">
    <citation type="journal article" date="2007" name="Mol. Genet. Genomics">
        <title>Chloroplast genomes of the diatoms Phaeodactylum tricornutum and Thalassiosira pseudonana: comparison with other plastid genomes of the red lineage.</title>
        <authorList>
            <person name="Oudot-Le Secq M.-P."/>
            <person name="Grimwood J."/>
            <person name="Shapiro H."/>
            <person name="Armbrust E.V."/>
            <person name="Bowler C."/>
            <person name="Green B.R."/>
        </authorList>
    </citation>
    <scope>NUCLEOTIDE SEQUENCE [LARGE SCALE GENOMIC DNA]</scope>
    <source>
        <strain>CCAP 1055/1</strain>
    </source>
</reference>
<protein>
    <recommendedName>
        <fullName evidence="1">Photosystem II reaction center protein X</fullName>
    </recommendedName>
</protein>
<organism>
    <name type="scientific">Phaeodactylum tricornutum (strain CCAP 1055/1)</name>
    <dbReference type="NCBI Taxonomy" id="556484"/>
    <lineage>
        <taxon>Eukaryota</taxon>
        <taxon>Sar</taxon>
        <taxon>Stramenopiles</taxon>
        <taxon>Ochrophyta</taxon>
        <taxon>Bacillariophyta</taxon>
        <taxon>Bacillariophyceae</taxon>
        <taxon>Bacillariophycidae</taxon>
        <taxon>Naviculales</taxon>
        <taxon>Phaeodactylaceae</taxon>
        <taxon>Phaeodactylum</taxon>
    </lineage>
</organism>
<keyword id="KW-0150">Chloroplast</keyword>
<keyword id="KW-0472">Membrane</keyword>
<keyword id="KW-0602">Photosynthesis</keyword>
<keyword id="KW-0604">Photosystem II</keyword>
<keyword id="KW-0934">Plastid</keyword>
<keyword id="KW-1185">Reference proteome</keyword>
<keyword id="KW-0793">Thylakoid</keyword>
<keyword id="KW-0812">Transmembrane</keyword>
<keyword id="KW-1133">Transmembrane helix</keyword>
<dbReference type="EMBL" id="EF067920">
    <property type="protein sequence ID" value="ABK20622.1"/>
    <property type="molecule type" value="Genomic_DNA"/>
</dbReference>
<dbReference type="RefSeq" id="YP_874399.1">
    <property type="nucleotide sequence ID" value="NC_008588.1"/>
</dbReference>
<dbReference type="SMR" id="A0T0C4"/>
<dbReference type="STRING" id="556484.A0T0C4"/>
<dbReference type="GeneID" id="4524581"/>
<dbReference type="InParanoid" id="A0T0C4"/>
<dbReference type="Proteomes" id="UP000000759">
    <property type="component" value="Chloroplast"/>
</dbReference>
<dbReference type="GO" id="GO:0009535">
    <property type="term" value="C:chloroplast thylakoid membrane"/>
    <property type="evidence" value="ECO:0007669"/>
    <property type="project" value="UniProtKB-SubCell"/>
</dbReference>
<dbReference type="GO" id="GO:0009523">
    <property type="term" value="C:photosystem II"/>
    <property type="evidence" value="ECO:0007669"/>
    <property type="project" value="UniProtKB-KW"/>
</dbReference>
<dbReference type="GO" id="GO:0015979">
    <property type="term" value="P:photosynthesis"/>
    <property type="evidence" value="ECO:0007669"/>
    <property type="project" value="UniProtKB-UniRule"/>
</dbReference>
<dbReference type="Gene3D" id="1.20.5.510">
    <property type="entry name" value="Single helix bin"/>
    <property type="match status" value="1"/>
</dbReference>
<dbReference type="HAMAP" id="MF_01386">
    <property type="entry name" value="PSII_PsbX_1"/>
    <property type="match status" value="1"/>
</dbReference>
<dbReference type="InterPro" id="IPR009518">
    <property type="entry name" value="PSII_PsbX"/>
</dbReference>
<dbReference type="InterPro" id="IPR023431">
    <property type="entry name" value="PSII_PsbX_type_1_subfam"/>
</dbReference>
<dbReference type="Pfam" id="PF06596">
    <property type="entry name" value="PsbX"/>
    <property type="match status" value="1"/>
</dbReference>
<geneLocation type="chloroplast"/>
<gene>
    <name evidence="1" type="primary">psbX</name>
</gene>
<evidence type="ECO:0000255" key="1">
    <source>
        <dbReference type="HAMAP-Rule" id="MF_01386"/>
    </source>
</evidence>
<sequence>MTPSLGSFIASLFAGAFIALAIGGVLVFISQSDRVTRS</sequence>
<proteinExistence type="inferred from homology"/>
<accession>A0T0C4</accession>
<name>PSBX_PHATC</name>
<comment type="function">
    <text evidence="1">Involved in the binding and/or turnover of quinones at the Q(B) site of photosystem II (PSII). PSII is a light-driven water plastoquinone oxidoreductase, using light energy to abstract electrons from H(2)O, generating a proton gradient subsequently used for ATP formation.</text>
</comment>
<comment type="subunit">
    <text evidence="1">PSII is composed of 1 copy each of membrane proteins PsbA, PsbB, PsbC, PsbD, PsbE, PsbF, PsbH, PsbI, PsbJ, PsbK, PsbL, PsbM, PsbT, PsbX, PsbY, PsbZ, Psb30/Ycf12, at least 3 peripheral proteins of the oxygen-evolving complex and a large number of cofactors. It forms dimeric complexes.</text>
</comment>
<comment type="subcellular location">
    <subcellularLocation>
        <location evidence="1">Plastid</location>
        <location evidence="1">Chloroplast thylakoid membrane</location>
        <topology evidence="1">Single-pass membrane protein</topology>
    </subcellularLocation>
</comment>
<comment type="similarity">
    <text evidence="1">Belongs to the PsbX family. Type 1 subfamily.</text>
</comment>
<feature type="chain" id="PRO_0000345387" description="Photosystem II reaction center protein X">
    <location>
        <begin position="1"/>
        <end position="38"/>
    </location>
</feature>
<feature type="transmembrane region" description="Helical" evidence="1">
    <location>
        <begin position="9"/>
        <end position="29"/>
    </location>
</feature>